<comment type="function">
    <text evidence="1">Catalyzes the condensation of carbamoyl phosphate and aspartate to form carbamoyl aspartate and inorganic phosphate, the committed step in the de novo pyrimidine nucleotide biosynthesis pathway.</text>
</comment>
<comment type="catalytic activity">
    <reaction evidence="1">
        <text>carbamoyl phosphate + L-aspartate = N-carbamoyl-L-aspartate + phosphate + H(+)</text>
        <dbReference type="Rhea" id="RHEA:20013"/>
        <dbReference type="ChEBI" id="CHEBI:15378"/>
        <dbReference type="ChEBI" id="CHEBI:29991"/>
        <dbReference type="ChEBI" id="CHEBI:32814"/>
        <dbReference type="ChEBI" id="CHEBI:43474"/>
        <dbReference type="ChEBI" id="CHEBI:58228"/>
        <dbReference type="EC" id="2.1.3.2"/>
    </reaction>
</comment>
<comment type="pathway">
    <text evidence="1">Pyrimidine metabolism; UMP biosynthesis via de novo pathway; (S)-dihydroorotate from bicarbonate: step 2/3.</text>
</comment>
<comment type="subunit">
    <text evidence="1">Heterododecamer (2C3:3R2) of six catalytic PyrB chains organized as two trimers (C3), and six regulatory PyrI chains organized as three dimers (R2).</text>
</comment>
<comment type="similarity">
    <text evidence="1">Belongs to the aspartate/ornithine carbamoyltransferase superfamily. ATCase family.</text>
</comment>
<proteinExistence type="inferred from homology"/>
<keyword id="KW-0665">Pyrimidine biosynthesis</keyword>
<keyword id="KW-1185">Reference proteome</keyword>
<keyword id="KW-0808">Transferase</keyword>
<sequence length="354" mass="38463">MEVIARPPLSRWSYRHVLDLAAFSQEDYATVLELASRFRALPMSGPRRLPALQGRLVTTLFFEPSTRTRSSFELAARRLSADVQSFSPASSALAKGESLLDTARTYVAMGADVLVVRHRCAGVPAELARDLEAAGCRTAVLNAGDGLHSHPSQALLDLFTLARHFNPETPTLEALAGKRIVIVGDVLHSRVARSNLWSLTACGVDVVLCGPASLLPDAFAQFTHAPPPGQAQDLVAQRGSLRIERDLDRALEGADAVMTLRLQQERMKEQLITSLEAYHQRYGLSHRRLERCGKSVPVLHPGPVNRGVELSGELLDDPSRSLVEEQVRNGIPVRMALLYLMAASEPASSAAGLS</sequence>
<name>PYRB_SYNR3</name>
<evidence type="ECO:0000255" key="1">
    <source>
        <dbReference type="HAMAP-Rule" id="MF_00001"/>
    </source>
</evidence>
<protein>
    <recommendedName>
        <fullName evidence="1">Aspartate carbamoyltransferase catalytic subunit</fullName>
        <ecNumber evidence="1">2.1.3.2</ecNumber>
    </recommendedName>
    <alternativeName>
        <fullName evidence="1">Aspartate transcarbamylase</fullName>
        <shortName evidence="1">ATCase</shortName>
    </alternativeName>
</protein>
<gene>
    <name evidence="1" type="primary">pyrB</name>
    <name type="ordered locus">SynRCC307_2204</name>
</gene>
<accession>A5GW48</accession>
<reference key="1">
    <citation type="submission" date="2006-05" db="EMBL/GenBank/DDBJ databases">
        <authorList>
            <consortium name="Genoscope"/>
        </authorList>
    </citation>
    <scope>NUCLEOTIDE SEQUENCE [LARGE SCALE GENOMIC DNA]</scope>
    <source>
        <strain>RCC307</strain>
    </source>
</reference>
<dbReference type="EC" id="2.1.3.2" evidence="1"/>
<dbReference type="EMBL" id="CT978603">
    <property type="protein sequence ID" value="CAK29107.1"/>
    <property type="molecule type" value="Genomic_DNA"/>
</dbReference>
<dbReference type="SMR" id="A5GW48"/>
<dbReference type="STRING" id="316278.SynRCC307_2204"/>
<dbReference type="KEGG" id="syr:SynRCC307_2204"/>
<dbReference type="eggNOG" id="COG0540">
    <property type="taxonomic scope" value="Bacteria"/>
</dbReference>
<dbReference type="HOGENOM" id="CLU_043846_2_0_3"/>
<dbReference type="UniPathway" id="UPA00070">
    <property type="reaction ID" value="UER00116"/>
</dbReference>
<dbReference type="Proteomes" id="UP000001115">
    <property type="component" value="Chromosome"/>
</dbReference>
<dbReference type="GO" id="GO:0005829">
    <property type="term" value="C:cytosol"/>
    <property type="evidence" value="ECO:0007669"/>
    <property type="project" value="TreeGrafter"/>
</dbReference>
<dbReference type="GO" id="GO:0016597">
    <property type="term" value="F:amino acid binding"/>
    <property type="evidence" value="ECO:0007669"/>
    <property type="project" value="InterPro"/>
</dbReference>
<dbReference type="GO" id="GO:0004070">
    <property type="term" value="F:aspartate carbamoyltransferase activity"/>
    <property type="evidence" value="ECO:0007669"/>
    <property type="project" value="UniProtKB-UniRule"/>
</dbReference>
<dbReference type="GO" id="GO:0006207">
    <property type="term" value="P:'de novo' pyrimidine nucleobase biosynthetic process"/>
    <property type="evidence" value="ECO:0007669"/>
    <property type="project" value="InterPro"/>
</dbReference>
<dbReference type="GO" id="GO:0044205">
    <property type="term" value="P:'de novo' UMP biosynthetic process"/>
    <property type="evidence" value="ECO:0007669"/>
    <property type="project" value="UniProtKB-UniRule"/>
</dbReference>
<dbReference type="GO" id="GO:0006520">
    <property type="term" value="P:amino acid metabolic process"/>
    <property type="evidence" value="ECO:0007669"/>
    <property type="project" value="InterPro"/>
</dbReference>
<dbReference type="Gene3D" id="3.40.50.1370">
    <property type="entry name" value="Aspartate/ornithine carbamoyltransferase"/>
    <property type="match status" value="2"/>
</dbReference>
<dbReference type="HAMAP" id="MF_00001">
    <property type="entry name" value="Asp_carb_tr"/>
    <property type="match status" value="1"/>
</dbReference>
<dbReference type="InterPro" id="IPR006132">
    <property type="entry name" value="Asp/Orn_carbamoyltranf_P-bd"/>
</dbReference>
<dbReference type="InterPro" id="IPR006130">
    <property type="entry name" value="Asp/Orn_carbamoylTrfase"/>
</dbReference>
<dbReference type="InterPro" id="IPR036901">
    <property type="entry name" value="Asp/Orn_carbamoylTrfase_sf"/>
</dbReference>
<dbReference type="InterPro" id="IPR002082">
    <property type="entry name" value="Asp_carbamoyltransf"/>
</dbReference>
<dbReference type="InterPro" id="IPR006131">
    <property type="entry name" value="Asp_carbamoyltransf_Asp/Orn-bd"/>
</dbReference>
<dbReference type="NCBIfam" id="TIGR00670">
    <property type="entry name" value="asp_carb_tr"/>
    <property type="match status" value="1"/>
</dbReference>
<dbReference type="NCBIfam" id="NF002032">
    <property type="entry name" value="PRK00856.1"/>
    <property type="match status" value="1"/>
</dbReference>
<dbReference type="PANTHER" id="PTHR45753:SF6">
    <property type="entry name" value="ASPARTATE CARBAMOYLTRANSFERASE"/>
    <property type="match status" value="1"/>
</dbReference>
<dbReference type="PANTHER" id="PTHR45753">
    <property type="entry name" value="ORNITHINE CARBAMOYLTRANSFERASE, MITOCHONDRIAL"/>
    <property type="match status" value="1"/>
</dbReference>
<dbReference type="Pfam" id="PF00185">
    <property type="entry name" value="OTCace"/>
    <property type="match status" value="1"/>
</dbReference>
<dbReference type="Pfam" id="PF02729">
    <property type="entry name" value="OTCace_N"/>
    <property type="match status" value="1"/>
</dbReference>
<dbReference type="PRINTS" id="PR00100">
    <property type="entry name" value="AOTCASE"/>
</dbReference>
<dbReference type="PRINTS" id="PR00101">
    <property type="entry name" value="ATCASE"/>
</dbReference>
<dbReference type="SUPFAM" id="SSF53671">
    <property type="entry name" value="Aspartate/ornithine carbamoyltransferase"/>
    <property type="match status" value="1"/>
</dbReference>
<dbReference type="PROSITE" id="PS00097">
    <property type="entry name" value="CARBAMOYLTRANSFERASE"/>
    <property type="match status" value="1"/>
</dbReference>
<feature type="chain" id="PRO_0000321173" description="Aspartate carbamoyltransferase catalytic subunit">
    <location>
        <begin position="1"/>
        <end position="354"/>
    </location>
</feature>
<feature type="binding site" evidence="1">
    <location>
        <position position="67"/>
    </location>
    <ligand>
        <name>carbamoyl phosphate</name>
        <dbReference type="ChEBI" id="CHEBI:58228"/>
    </ligand>
</feature>
<feature type="binding site" evidence="1">
    <location>
        <position position="68"/>
    </location>
    <ligand>
        <name>carbamoyl phosphate</name>
        <dbReference type="ChEBI" id="CHEBI:58228"/>
    </ligand>
</feature>
<feature type="binding site" evidence="1">
    <location>
        <position position="95"/>
    </location>
    <ligand>
        <name>L-aspartate</name>
        <dbReference type="ChEBI" id="CHEBI:29991"/>
    </ligand>
</feature>
<feature type="binding site" evidence="1">
    <location>
        <position position="117"/>
    </location>
    <ligand>
        <name>carbamoyl phosphate</name>
        <dbReference type="ChEBI" id="CHEBI:58228"/>
    </ligand>
</feature>
<feature type="binding site" evidence="1">
    <location>
        <position position="150"/>
    </location>
    <ligand>
        <name>carbamoyl phosphate</name>
        <dbReference type="ChEBI" id="CHEBI:58228"/>
    </ligand>
</feature>
<feature type="binding site" evidence="1">
    <location>
        <position position="153"/>
    </location>
    <ligand>
        <name>carbamoyl phosphate</name>
        <dbReference type="ChEBI" id="CHEBI:58228"/>
    </ligand>
</feature>
<feature type="binding site" evidence="1">
    <location>
        <position position="190"/>
    </location>
    <ligand>
        <name>L-aspartate</name>
        <dbReference type="ChEBI" id="CHEBI:29991"/>
    </ligand>
</feature>
<feature type="binding site" evidence="1">
    <location>
        <position position="261"/>
    </location>
    <ligand>
        <name>L-aspartate</name>
        <dbReference type="ChEBI" id="CHEBI:29991"/>
    </ligand>
</feature>
<feature type="binding site" evidence="1">
    <location>
        <position position="302"/>
    </location>
    <ligand>
        <name>carbamoyl phosphate</name>
        <dbReference type="ChEBI" id="CHEBI:58228"/>
    </ligand>
</feature>
<feature type="binding site" evidence="1">
    <location>
        <position position="303"/>
    </location>
    <ligand>
        <name>carbamoyl phosphate</name>
        <dbReference type="ChEBI" id="CHEBI:58228"/>
    </ligand>
</feature>
<organism>
    <name type="scientific">Synechococcus sp. (strain RCC307)</name>
    <dbReference type="NCBI Taxonomy" id="316278"/>
    <lineage>
        <taxon>Bacteria</taxon>
        <taxon>Bacillati</taxon>
        <taxon>Cyanobacteriota</taxon>
        <taxon>Cyanophyceae</taxon>
        <taxon>Synechococcales</taxon>
        <taxon>Synechococcaceae</taxon>
        <taxon>Synechococcus</taxon>
    </lineage>
</organism>